<protein>
    <recommendedName>
        <fullName>Nucleoside diphosphate kinase A</fullName>
        <shortName>NDK A</shortName>
        <shortName>NDP kinase A</shortName>
        <ecNumber>2.7.4.6</ecNumber>
    </recommendedName>
</protein>
<keyword id="KW-0067">ATP-binding</keyword>
<keyword id="KW-0963">Cytoplasm</keyword>
<keyword id="KW-0221">Differentiation</keyword>
<keyword id="KW-0254">Endocytosis</keyword>
<keyword id="KW-1017">Isopeptide bond</keyword>
<keyword id="KW-0418">Kinase</keyword>
<keyword id="KW-0460">Magnesium</keyword>
<keyword id="KW-0479">Metal-binding</keyword>
<keyword id="KW-0524">Neurogenesis</keyword>
<keyword id="KW-0546">Nucleotide metabolism</keyword>
<keyword id="KW-0547">Nucleotide-binding</keyword>
<keyword id="KW-0539">Nucleus</keyword>
<keyword id="KW-0597">Phosphoprotein</keyword>
<keyword id="KW-1185">Reference proteome</keyword>
<keyword id="KW-0808">Transferase</keyword>
<keyword id="KW-0832">Ubl conjugation</keyword>
<name>NDKA_PONAB</name>
<comment type="function">
    <text evidence="1">Major role in the synthesis of nucleoside triphosphates other than ATP. The ATP gamma phosphate is transferred to the NDP beta phosphate via a ping-pong mechanism, using a phosphorylated active-site intermediate. Possesses nucleoside-diphosphate kinase, serine/threonine-specific protein kinase, geranyl and farnesyl pyrophosphate kinase, histidine protein kinase and 3'-5' exonuclease activities. Involved in cell proliferation, differentiation and development, signal transduction, G protein-coupled receptor endocytosis, and gene expression. Required for neural development including neural patterning and cell fate determination. During GZMA-mediated cell death, works in concert with TREX1. NME1 nicks one strand of DNA and TREX1 removes bases from the free 3' end to enhance DNA damage and prevent DNA end reannealing and rapid repair (By similarity).</text>
</comment>
<comment type="catalytic activity">
    <reaction>
        <text>a 2'-deoxyribonucleoside 5'-diphosphate + ATP = a 2'-deoxyribonucleoside 5'-triphosphate + ADP</text>
        <dbReference type="Rhea" id="RHEA:44640"/>
        <dbReference type="ChEBI" id="CHEBI:30616"/>
        <dbReference type="ChEBI" id="CHEBI:61560"/>
        <dbReference type="ChEBI" id="CHEBI:73316"/>
        <dbReference type="ChEBI" id="CHEBI:456216"/>
        <dbReference type="EC" id="2.7.4.6"/>
    </reaction>
</comment>
<comment type="catalytic activity">
    <reaction>
        <text>a ribonucleoside 5'-diphosphate + ATP = a ribonucleoside 5'-triphosphate + ADP</text>
        <dbReference type="Rhea" id="RHEA:18113"/>
        <dbReference type="ChEBI" id="CHEBI:30616"/>
        <dbReference type="ChEBI" id="CHEBI:57930"/>
        <dbReference type="ChEBI" id="CHEBI:61557"/>
        <dbReference type="ChEBI" id="CHEBI:456216"/>
        <dbReference type="EC" id="2.7.4.6"/>
    </reaction>
</comment>
<comment type="cofactor">
    <cofactor evidence="1">
        <name>Mg(2+)</name>
        <dbReference type="ChEBI" id="CHEBI:18420"/>
    </cofactor>
</comment>
<comment type="activity regulation">
    <text evidence="1">Autophosphorylation at His-118 increases serine/threonine protein kinase activity of the enzyme. Interaction with the SET complex inhibits exonuclease activity (By similarity).</text>
</comment>
<comment type="subunit">
    <text evidence="2">Hexamer of two different chains: A and B (A6, A5B, A4B2, A3B3, A2B4, AB5, B6). Interacts with PRUNE1. Component of the SET complex, composed of at least ANP32A, APEX1, HMGB2, NME1, SET and TREX1. Within this complex, interacts directly with SET. Also interacts with TREX1, but only following translocation to the nucleus.</text>
</comment>
<comment type="subcellular location">
    <subcellularLocation>
        <location>Cytoplasm</location>
    </subcellularLocation>
    <subcellularLocation>
        <location evidence="1">Nucleus</location>
    </subcellularLocation>
</comment>
<comment type="similarity">
    <text evidence="3">Belongs to the NDK family.</text>
</comment>
<reference key="1">
    <citation type="submission" date="2004-11" db="EMBL/GenBank/DDBJ databases">
        <authorList>
            <consortium name="The German cDNA consortium"/>
        </authorList>
    </citation>
    <scope>NUCLEOTIDE SEQUENCE [LARGE SCALE MRNA]</scope>
    <source>
        <tissue>Heart</tissue>
    </source>
</reference>
<gene>
    <name type="primary">NME1</name>
</gene>
<feature type="chain" id="PRO_0000250198" description="Nucleoside diphosphate kinase A">
    <location>
        <begin position="1"/>
        <end position="152"/>
    </location>
</feature>
<feature type="active site" description="Pros-phosphohistidine intermediate" evidence="1">
    <location>
        <position position="118"/>
    </location>
</feature>
<feature type="binding site" evidence="1">
    <location>
        <position position="12"/>
    </location>
    <ligand>
        <name>ATP</name>
        <dbReference type="ChEBI" id="CHEBI:30616"/>
    </ligand>
</feature>
<feature type="binding site" evidence="1">
    <location>
        <position position="60"/>
    </location>
    <ligand>
        <name>ATP</name>
        <dbReference type="ChEBI" id="CHEBI:30616"/>
    </ligand>
</feature>
<feature type="binding site" evidence="1">
    <location>
        <position position="88"/>
    </location>
    <ligand>
        <name>ATP</name>
        <dbReference type="ChEBI" id="CHEBI:30616"/>
    </ligand>
</feature>
<feature type="binding site" evidence="1">
    <location>
        <position position="94"/>
    </location>
    <ligand>
        <name>ATP</name>
        <dbReference type="ChEBI" id="CHEBI:30616"/>
    </ligand>
</feature>
<feature type="binding site" evidence="1">
    <location>
        <position position="105"/>
    </location>
    <ligand>
        <name>ATP</name>
        <dbReference type="ChEBI" id="CHEBI:30616"/>
    </ligand>
</feature>
<feature type="binding site" evidence="1">
    <location>
        <position position="115"/>
    </location>
    <ligand>
        <name>ATP</name>
        <dbReference type="ChEBI" id="CHEBI:30616"/>
    </ligand>
</feature>
<feature type="modified residue" description="Phosphoserine" evidence="2">
    <location>
        <position position="120"/>
    </location>
</feature>
<feature type="modified residue" description="Phosphoserine" evidence="2">
    <location>
        <position position="122"/>
    </location>
</feature>
<feature type="modified residue" description="Phosphoserine" evidence="2">
    <location>
        <position position="125"/>
    </location>
</feature>
<feature type="cross-link" description="Glycyl lysine isopeptide (Lys-Gly) (interchain with G-Cter in ubiquitin)" evidence="2">
    <location>
        <position position="100"/>
    </location>
</feature>
<accession>Q5RC56</accession>
<sequence length="152" mass="17149">MANCERTFIAIKPDGVQRGLVGEIIKRFEQKGFRLVGLKFMQASEDLLKEHYVDLKDRPFFAGLVKYMHSGPVVAMVWEGLNVVKTGRVMLGETNPADSKPGTIRGDFCIQVGRNIIHGSDSVESAEKEIGLWFHPEELVDYTSCAQNWIYE</sequence>
<dbReference type="EC" id="2.7.4.6"/>
<dbReference type="EMBL" id="CR858425">
    <property type="protein sequence ID" value="CAH90654.1"/>
    <property type="molecule type" value="mRNA"/>
</dbReference>
<dbReference type="RefSeq" id="NP_001125354.1">
    <property type="nucleotide sequence ID" value="NM_001131882.1"/>
</dbReference>
<dbReference type="SMR" id="Q5RC56"/>
<dbReference type="FunCoup" id="Q5RC56">
    <property type="interactions" value="1688"/>
</dbReference>
<dbReference type="InParanoid" id="Q5RC56"/>
<dbReference type="Proteomes" id="UP000001595">
    <property type="component" value="Unplaced"/>
</dbReference>
<dbReference type="GO" id="GO:0005737">
    <property type="term" value="C:cytoplasm"/>
    <property type="evidence" value="ECO:0007669"/>
    <property type="project" value="UniProtKB-SubCell"/>
</dbReference>
<dbReference type="GO" id="GO:0005634">
    <property type="term" value="C:nucleus"/>
    <property type="evidence" value="ECO:0007669"/>
    <property type="project" value="UniProtKB-SubCell"/>
</dbReference>
<dbReference type="GO" id="GO:0005524">
    <property type="term" value="F:ATP binding"/>
    <property type="evidence" value="ECO:0007669"/>
    <property type="project" value="UniProtKB-KW"/>
</dbReference>
<dbReference type="GO" id="GO:0046872">
    <property type="term" value="F:metal ion binding"/>
    <property type="evidence" value="ECO:0007669"/>
    <property type="project" value="UniProtKB-KW"/>
</dbReference>
<dbReference type="GO" id="GO:0004550">
    <property type="term" value="F:nucleoside diphosphate kinase activity"/>
    <property type="evidence" value="ECO:0007669"/>
    <property type="project" value="UniProtKB-EC"/>
</dbReference>
<dbReference type="GO" id="GO:0030154">
    <property type="term" value="P:cell differentiation"/>
    <property type="evidence" value="ECO:0007669"/>
    <property type="project" value="UniProtKB-KW"/>
</dbReference>
<dbReference type="GO" id="GO:0006241">
    <property type="term" value="P:CTP biosynthetic process"/>
    <property type="evidence" value="ECO:0007669"/>
    <property type="project" value="InterPro"/>
</dbReference>
<dbReference type="GO" id="GO:0006897">
    <property type="term" value="P:endocytosis"/>
    <property type="evidence" value="ECO:0007669"/>
    <property type="project" value="UniProtKB-KW"/>
</dbReference>
<dbReference type="GO" id="GO:0006183">
    <property type="term" value="P:GTP biosynthetic process"/>
    <property type="evidence" value="ECO:0007669"/>
    <property type="project" value="InterPro"/>
</dbReference>
<dbReference type="GO" id="GO:0007399">
    <property type="term" value="P:nervous system development"/>
    <property type="evidence" value="ECO:0007669"/>
    <property type="project" value="UniProtKB-KW"/>
</dbReference>
<dbReference type="GO" id="GO:0006228">
    <property type="term" value="P:UTP biosynthetic process"/>
    <property type="evidence" value="ECO:0007669"/>
    <property type="project" value="InterPro"/>
</dbReference>
<dbReference type="CDD" id="cd04413">
    <property type="entry name" value="NDPk_I"/>
    <property type="match status" value="1"/>
</dbReference>
<dbReference type="FunFam" id="3.30.70.141:FF:000039">
    <property type="entry name" value="Nucleoside diphosphate kinase B"/>
    <property type="match status" value="1"/>
</dbReference>
<dbReference type="Gene3D" id="3.30.70.141">
    <property type="entry name" value="Nucleoside diphosphate kinase-like domain"/>
    <property type="match status" value="1"/>
</dbReference>
<dbReference type="HAMAP" id="MF_00451">
    <property type="entry name" value="NDP_kinase"/>
    <property type="match status" value="1"/>
</dbReference>
<dbReference type="InterPro" id="IPR034907">
    <property type="entry name" value="NDK-like_dom"/>
</dbReference>
<dbReference type="InterPro" id="IPR036850">
    <property type="entry name" value="NDK-like_dom_sf"/>
</dbReference>
<dbReference type="InterPro" id="IPR001564">
    <property type="entry name" value="Nucleoside_diP_kinase"/>
</dbReference>
<dbReference type="InterPro" id="IPR023005">
    <property type="entry name" value="Nucleoside_diP_kinase_AS"/>
</dbReference>
<dbReference type="NCBIfam" id="NF001908">
    <property type="entry name" value="PRK00668.1"/>
    <property type="match status" value="1"/>
</dbReference>
<dbReference type="PANTHER" id="PTHR11349">
    <property type="entry name" value="NUCLEOSIDE DIPHOSPHATE KINASE"/>
    <property type="match status" value="1"/>
</dbReference>
<dbReference type="Pfam" id="PF00334">
    <property type="entry name" value="NDK"/>
    <property type="match status" value="1"/>
</dbReference>
<dbReference type="PRINTS" id="PR01243">
    <property type="entry name" value="NUCDPKINASE"/>
</dbReference>
<dbReference type="SMART" id="SM00562">
    <property type="entry name" value="NDK"/>
    <property type="match status" value="1"/>
</dbReference>
<dbReference type="SUPFAM" id="SSF54919">
    <property type="entry name" value="Nucleoside diphosphate kinase, NDK"/>
    <property type="match status" value="1"/>
</dbReference>
<dbReference type="PROSITE" id="PS00469">
    <property type="entry name" value="NDPK"/>
    <property type="match status" value="1"/>
</dbReference>
<dbReference type="PROSITE" id="PS51374">
    <property type="entry name" value="NDPK_LIKE"/>
    <property type="match status" value="1"/>
</dbReference>
<proteinExistence type="evidence at transcript level"/>
<organism>
    <name type="scientific">Pongo abelii</name>
    <name type="common">Sumatran orangutan</name>
    <name type="synonym">Pongo pygmaeus abelii</name>
    <dbReference type="NCBI Taxonomy" id="9601"/>
    <lineage>
        <taxon>Eukaryota</taxon>
        <taxon>Metazoa</taxon>
        <taxon>Chordata</taxon>
        <taxon>Craniata</taxon>
        <taxon>Vertebrata</taxon>
        <taxon>Euteleostomi</taxon>
        <taxon>Mammalia</taxon>
        <taxon>Eutheria</taxon>
        <taxon>Euarchontoglires</taxon>
        <taxon>Primates</taxon>
        <taxon>Haplorrhini</taxon>
        <taxon>Catarrhini</taxon>
        <taxon>Hominidae</taxon>
        <taxon>Pongo</taxon>
    </lineage>
</organism>
<evidence type="ECO:0000250" key="1"/>
<evidence type="ECO:0000250" key="2">
    <source>
        <dbReference type="UniProtKB" id="P15531"/>
    </source>
</evidence>
<evidence type="ECO:0000305" key="3"/>